<protein>
    <recommendedName>
        <fullName>Pro-adrenomedullin</fullName>
    </recommendedName>
    <component>
        <recommendedName>
            <fullName evidence="6">Adrenomedullin</fullName>
            <shortName>AM</shortName>
        </recommendedName>
    </component>
    <component>
        <recommendedName>
            <fullName evidence="2">Proadrenomedullin N-20 terminal peptide</fullName>
        </recommendedName>
        <alternativeName>
            <fullName evidence="1">ProAM N-terminal 20 peptide</fullName>
            <shortName evidence="1">PAMP</shortName>
            <shortName>ProAM-N20</shortName>
        </alternativeName>
    </component>
</protein>
<comment type="function">
    <text evidence="1 5">Adrenomedullin/ADM and proadrenomedullin N-20 terminal peptide/PAMP are peptide hormones that act as potent hypotensive and vasodilatator agents (PubMed:7690563). Numerous actions have been reported most related to the physiologic control of fluid and electrolyte homeostasis (By similarity).</text>
</comment>
<comment type="function">
    <molecule>Adrenomedullin</molecule>
    <text evidence="1">ADM function is mediated by the CALCRL-RAMP2 and CALCRL-RAMP3 receptor complexes with ADM showing the highest potency for the CALCRL-RAMP2 complex.</text>
</comment>
<comment type="subcellular location">
    <subcellularLocation>
        <location evidence="1">Secreted</location>
    </subcellularLocation>
</comment>
<comment type="tissue specificity">
    <text evidence="5">Expressed in adrenal glands, lung, kidney, heart, spleen, duodenum and submandibular glands.</text>
</comment>
<comment type="similarity">
    <text evidence="7">Belongs to the adrenomedullin family.</text>
</comment>
<name>ADML_RAT</name>
<accession>P43145</accession>
<reference key="1">
    <citation type="journal article" date="1993" name="Biochem. Biophys. Res. Commun.">
        <title>Molecular cloning and biological activities of rat adrenomedullin, a hypotensive peptide.</title>
        <authorList>
            <person name="Sakata J."/>
            <person name="Shimokuba T."/>
            <person name="Kitamura K."/>
            <person name="Nakamura S."/>
            <person name="Kangawa K."/>
            <person name="Matsuo H."/>
            <person name="Eto T."/>
        </authorList>
    </citation>
    <scope>NUCLEOTIDE SEQUENCE [MRNA]</scope>
    <scope>FUNCTION</scope>
    <scope>TISSUE SPECIFICITY</scope>
    <source>
        <strain>Sprague-Dawley</strain>
        <tissue>Adrenal gland</tissue>
    </source>
</reference>
<reference key="2">
    <citation type="journal article" date="1995" name="Proc. Natl. Acad. Sci. U.S.A.">
        <title>Discovery of adrenomedullin in rat ischemic cortex and evidence for its role in exacerbating focal brain ischemic damage.</title>
        <authorList>
            <person name="Wang X."/>
            <person name="Yue T.L."/>
            <person name="Barone F.C."/>
            <person name="White R.F."/>
            <person name="Clark R.K."/>
            <person name="Willette R.N."/>
            <person name="Sulpizio A.C."/>
            <person name="Aiyar N.V."/>
            <person name="Ruffolo R.R. Jr."/>
            <person name="Feuerstein G.Z."/>
        </authorList>
    </citation>
    <scope>NUCLEOTIDE SEQUENCE [MRNA]</scope>
    <source>
        <tissue>Brain</tissue>
    </source>
</reference>
<reference key="3">
    <citation type="journal article" date="2004" name="Genome Res.">
        <title>The status, quality, and expansion of the NIH full-length cDNA project: the Mammalian Gene Collection (MGC).</title>
        <authorList>
            <consortium name="The MGC Project Team"/>
        </authorList>
    </citation>
    <scope>NUCLEOTIDE SEQUENCE [LARGE SCALE MRNA]</scope>
    <source>
        <tissue>Prostate</tissue>
    </source>
</reference>
<reference key="4">
    <citation type="journal article" date="2015" name="J. Proteome Res.">
        <title>Peptidomics for studying limited proteolysis.</title>
        <authorList>
            <person name="Tsuchiya T."/>
            <person name="Osaki T."/>
            <person name="Minamino N."/>
            <person name="Sasaki K."/>
        </authorList>
    </citation>
    <scope>PROTEOLYTIC PROCESSING</scope>
    <scope>AMIDATION AT ARG-41 AND TYR-143</scope>
    <scope>IDENTIFICATION BY MASS SPECTROMETRY</scope>
</reference>
<gene>
    <name evidence="8" type="primary">Adm</name>
</gene>
<keyword id="KW-0027">Amidation</keyword>
<keyword id="KW-0165">Cleavage on pair of basic residues</keyword>
<keyword id="KW-1015">Disulfide bond</keyword>
<keyword id="KW-0372">Hormone</keyword>
<keyword id="KW-1185">Reference proteome</keyword>
<keyword id="KW-0964">Secreted</keyword>
<keyword id="KW-0732">Signal</keyword>
<sequence length="185" mass="20636">MKLVSIALMLLGSLAVLGADTARLDTSSQFRKKWNKWALSRGKRELQASSSYPTGLVDEKTVPTQTLGLQDKQSTSSTPQASTQSTAHIRVKRYRQSMNQGSRSTGCRFGTCTMQKLAHQIYQFTDKDKDGMAPRNKISPQGYGRRRRRSLPEVLRARTVESSQEQTHSAPASPAHQDISRVSRL</sequence>
<proteinExistence type="evidence at protein level"/>
<feature type="signal peptide" evidence="2">
    <location>
        <begin position="1"/>
        <end position="21"/>
    </location>
</feature>
<feature type="peptide" id="PRO_0000000973" description="Proadrenomedullin N-20 terminal peptide" evidence="4">
    <location>
        <begin position="22"/>
        <end position="41"/>
    </location>
</feature>
<feature type="propeptide" id="PRO_0000000974" evidence="4">
    <location>
        <begin position="45"/>
        <end position="91"/>
    </location>
</feature>
<feature type="peptide" id="PRO_0000000975" description="Adrenomedullin" evidence="4">
    <location>
        <begin position="94"/>
        <end position="143"/>
    </location>
</feature>
<feature type="propeptide" id="PRO_0000000976" description="PreproAM C-terminal fragment" evidence="4">
    <location>
        <begin position="150"/>
        <end position="185"/>
    </location>
</feature>
<feature type="region of interest" description="Disordered" evidence="3">
    <location>
        <begin position="68"/>
        <end position="89"/>
    </location>
</feature>
<feature type="region of interest" description="Disordered" evidence="3">
    <location>
        <begin position="125"/>
        <end position="185"/>
    </location>
</feature>
<feature type="compositionally biased region" description="Low complexity" evidence="3">
    <location>
        <begin position="73"/>
        <end position="87"/>
    </location>
</feature>
<feature type="compositionally biased region" description="Polar residues" evidence="3">
    <location>
        <begin position="160"/>
        <end position="170"/>
    </location>
</feature>
<feature type="site" description="Required for CALCRL receptor interaction" evidence="1">
    <location>
        <position position="113"/>
    </location>
</feature>
<feature type="site" description="Required for CALCRL receptor interaction" evidence="1">
    <location>
        <position position="122"/>
    </location>
</feature>
<feature type="modified residue" description="Arginine amide" evidence="4">
    <location>
        <position position="41"/>
    </location>
</feature>
<feature type="modified residue" description="Tyrosine amide" evidence="4">
    <location>
        <position position="143"/>
    </location>
</feature>
<feature type="disulfide bond" evidence="1">
    <location>
        <begin position="107"/>
        <end position="112"/>
    </location>
</feature>
<evidence type="ECO:0000250" key="1">
    <source>
        <dbReference type="UniProtKB" id="P35318"/>
    </source>
</evidence>
<evidence type="ECO:0000250" key="2">
    <source>
        <dbReference type="UniProtKB" id="P53366"/>
    </source>
</evidence>
<evidence type="ECO:0000256" key="3">
    <source>
        <dbReference type="SAM" id="MobiDB-lite"/>
    </source>
</evidence>
<evidence type="ECO:0000269" key="4">
    <source>
    </source>
</evidence>
<evidence type="ECO:0000269" key="5">
    <source>
    </source>
</evidence>
<evidence type="ECO:0000303" key="6">
    <source>
    </source>
</evidence>
<evidence type="ECO:0000305" key="7"/>
<evidence type="ECO:0000312" key="8">
    <source>
        <dbReference type="RGD" id="2047"/>
    </source>
</evidence>
<dbReference type="EMBL" id="D15069">
    <property type="protein sequence ID" value="BAA03665.1"/>
    <property type="molecule type" value="mRNA"/>
</dbReference>
<dbReference type="EMBL" id="U15419">
    <property type="protein sequence ID" value="AAB60519.1"/>
    <property type="molecule type" value="mRNA"/>
</dbReference>
<dbReference type="EMBL" id="BC061775">
    <property type="protein sequence ID" value="AAH61775.1"/>
    <property type="molecule type" value="mRNA"/>
</dbReference>
<dbReference type="PIR" id="JN0766">
    <property type="entry name" value="JN0766"/>
</dbReference>
<dbReference type="RefSeq" id="NP_036847.1">
    <property type="nucleotide sequence ID" value="NM_012715.2"/>
</dbReference>
<dbReference type="RefSeq" id="XP_008757909.1">
    <property type="nucleotide sequence ID" value="XM_008759687.2"/>
</dbReference>
<dbReference type="RefSeq" id="XP_063137222.1">
    <property type="nucleotide sequence ID" value="XM_063281152.1"/>
</dbReference>
<dbReference type="RefSeq" id="XP_063137226.1">
    <property type="nucleotide sequence ID" value="XM_063281156.1"/>
</dbReference>
<dbReference type="SMR" id="P43145"/>
<dbReference type="BioGRID" id="247106">
    <property type="interactions" value="2"/>
</dbReference>
<dbReference type="FunCoup" id="P43145">
    <property type="interactions" value="230"/>
</dbReference>
<dbReference type="STRING" id="10116.ENSRNOP00000035811"/>
<dbReference type="iPTMnet" id="P43145"/>
<dbReference type="PhosphoSitePlus" id="P43145"/>
<dbReference type="PaxDb" id="10116-ENSRNOP00000035811"/>
<dbReference type="Ensembl" id="ENSRNOT00000036718.2">
    <property type="protein sequence ID" value="ENSRNOP00000035811.1"/>
    <property type="gene ID" value="ENSRNOG00000027030.2"/>
</dbReference>
<dbReference type="GeneID" id="25026"/>
<dbReference type="KEGG" id="rno:25026"/>
<dbReference type="UCSC" id="RGD:2047">
    <property type="organism name" value="rat"/>
</dbReference>
<dbReference type="AGR" id="RGD:2047"/>
<dbReference type="CTD" id="133"/>
<dbReference type="RGD" id="2047">
    <property type="gene designation" value="Adm"/>
</dbReference>
<dbReference type="eggNOG" id="ENOG502S4SF">
    <property type="taxonomic scope" value="Eukaryota"/>
</dbReference>
<dbReference type="GeneTree" id="ENSGT00940000154380"/>
<dbReference type="HOGENOM" id="CLU_099291_1_0_1"/>
<dbReference type="InParanoid" id="P43145"/>
<dbReference type="OMA" id="QSFLYCC"/>
<dbReference type="OrthoDB" id="87973at9989"/>
<dbReference type="PhylomeDB" id="P43145"/>
<dbReference type="TreeFam" id="TF333447"/>
<dbReference type="Reactome" id="R-RNO-419812">
    <property type="pathway name" value="Calcitonin-like ligand receptors"/>
</dbReference>
<dbReference type="Reactome" id="R-RNO-9856530">
    <property type="pathway name" value="High laminar flow shear stress activates signaling by PIEZO1 and PECAM1:CDH5:KDR in endothelial cells"/>
</dbReference>
<dbReference type="PRO" id="PR:P43145"/>
<dbReference type="Proteomes" id="UP000002494">
    <property type="component" value="Chromosome 1"/>
</dbReference>
<dbReference type="Bgee" id="ENSRNOG00000027030">
    <property type="expression patterns" value="Expressed in heart and 19 other cell types or tissues"/>
</dbReference>
<dbReference type="GO" id="GO:0005737">
    <property type="term" value="C:cytoplasm"/>
    <property type="evidence" value="ECO:0000266"/>
    <property type="project" value="RGD"/>
</dbReference>
<dbReference type="GO" id="GO:0005615">
    <property type="term" value="C:extracellular space"/>
    <property type="evidence" value="ECO:0000314"/>
    <property type="project" value="RGD"/>
</dbReference>
<dbReference type="GO" id="GO:0031700">
    <property type="term" value="F:adrenomedullin receptor binding"/>
    <property type="evidence" value="ECO:0000314"/>
    <property type="project" value="RGD"/>
</dbReference>
<dbReference type="GO" id="GO:0005179">
    <property type="term" value="F:hormone activity"/>
    <property type="evidence" value="ECO:0000266"/>
    <property type="project" value="RGD"/>
</dbReference>
<dbReference type="GO" id="GO:0007189">
    <property type="term" value="P:adenylate cyclase-activating G protein-coupled receptor signaling pathway"/>
    <property type="evidence" value="ECO:0000266"/>
    <property type="project" value="RGD"/>
</dbReference>
<dbReference type="GO" id="GO:1990410">
    <property type="term" value="P:adrenomedullin receptor signaling pathway"/>
    <property type="evidence" value="ECO:0000266"/>
    <property type="project" value="RGD"/>
</dbReference>
<dbReference type="GO" id="GO:0008209">
    <property type="term" value="P:androgen metabolic process"/>
    <property type="evidence" value="ECO:0000314"/>
    <property type="project" value="RGD"/>
</dbReference>
<dbReference type="GO" id="GO:0031100">
    <property type="term" value="P:animal organ regeneration"/>
    <property type="evidence" value="ECO:0000270"/>
    <property type="project" value="RGD"/>
</dbReference>
<dbReference type="GO" id="GO:0060670">
    <property type="term" value="P:branching involved in labyrinthine layer morphogenesis"/>
    <property type="evidence" value="ECO:0000266"/>
    <property type="project" value="RGD"/>
</dbReference>
<dbReference type="GO" id="GO:0008283">
    <property type="term" value="P:cell population proliferation"/>
    <property type="evidence" value="ECO:0000266"/>
    <property type="project" value="RGD"/>
</dbReference>
<dbReference type="GO" id="GO:0071466">
    <property type="term" value="P:cellular response to xenobiotic stimulus"/>
    <property type="evidence" value="ECO:0000270"/>
    <property type="project" value="RGD"/>
</dbReference>
<dbReference type="GO" id="GO:0048589">
    <property type="term" value="P:developmental growth"/>
    <property type="evidence" value="ECO:0000266"/>
    <property type="project" value="RGD"/>
</dbReference>
<dbReference type="GO" id="GO:0007565">
    <property type="term" value="P:female pregnancy"/>
    <property type="evidence" value="ECO:0000270"/>
    <property type="project" value="RGD"/>
</dbReference>
<dbReference type="GO" id="GO:0002031">
    <property type="term" value="P:G protein-coupled receptor internalization"/>
    <property type="evidence" value="ECO:0000266"/>
    <property type="project" value="RGD"/>
</dbReference>
<dbReference type="GO" id="GO:0007507">
    <property type="term" value="P:heart development"/>
    <property type="evidence" value="ECO:0000266"/>
    <property type="project" value="RGD"/>
</dbReference>
<dbReference type="GO" id="GO:0008285">
    <property type="term" value="P:negative regulation of cell population proliferation"/>
    <property type="evidence" value="ECO:0000315"/>
    <property type="project" value="RGD"/>
</dbReference>
<dbReference type="GO" id="GO:0043116">
    <property type="term" value="P:negative regulation of vascular permeability"/>
    <property type="evidence" value="ECO:0000266"/>
    <property type="project" value="RGD"/>
</dbReference>
<dbReference type="GO" id="GO:0045906">
    <property type="term" value="P:negative regulation of vasoconstriction"/>
    <property type="evidence" value="ECO:0000266"/>
    <property type="project" value="RGD"/>
</dbReference>
<dbReference type="GO" id="GO:0001843">
    <property type="term" value="P:neural tube closure"/>
    <property type="evidence" value="ECO:0000266"/>
    <property type="project" value="RGD"/>
</dbReference>
<dbReference type="GO" id="GO:0031102">
    <property type="term" value="P:neuron projection regeneration"/>
    <property type="evidence" value="ECO:0000315"/>
    <property type="project" value="RGD"/>
</dbReference>
<dbReference type="GO" id="GO:0042475">
    <property type="term" value="P:odontogenesis of dentin-containing tooth"/>
    <property type="evidence" value="ECO:0000270"/>
    <property type="project" value="RGD"/>
</dbReference>
<dbReference type="GO" id="GO:0045766">
    <property type="term" value="P:positive regulation of angiogenesis"/>
    <property type="evidence" value="ECO:0000266"/>
    <property type="project" value="RGD"/>
</dbReference>
<dbReference type="GO" id="GO:0043065">
    <property type="term" value="P:positive regulation of apoptotic process"/>
    <property type="evidence" value="ECO:0000315"/>
    <property type="project" value="RGD"/>
</dbReference>
<dbReference type="GO" id="GO:0008284">
    <property type="term" value="P:positive regulation of cell population proliferation"/>
    <property type="evidence" value="ECO:0000266"/>
    <property type="project" value="RGD"/>
</dbReference>
<dbReference type="GO" id="GO:0007204">
    <property type="term" value="P:positive regulation of cytosolic calcium ion concentration"/>
    <property type="evidence" value="ECO:0000314"/>
    <property type="project" value="RGD"/>
</dbReference>
<dbReference type="GO" id="GO:0010460">
    <property type="term" value="P:positive regulation of heart rate"/>
    <property type="evidence" value="ECO:0000314"/>
    <property type="project" value="RGD"/>
</dbReference>
<dbReference type="GO" id="GO:2001214">
    <property type="term" value="P:positive regulation of vasculogenesis"/>
    <property type="evidence" value="ECO:0000266"/>
    <property type="project" value="RGD"/>
</dbReference>
<dbReference type="GO" id="GO:0031623">
    <property type="term" value="P:receptor internalization"/>
    <property type="evidence" value="ECO:0000266"/>
    <property type="project" value="RGD"/>
</dbReference>
<dbReference type="GO" id="GO:0003073">
    <property type="term" value="P:regulation of systemic arterial blood pressure"/>
    <property type="evidence" value="ECO:0000266"/>
    <property type="project" value="RGD"/>
</dbReference>
<dbReference type="GO" id="GO:0002026">
    <property type="term" value="P:regulation of the force of heart contraction"/>
    <property type="evidence" value="ECO:0000314"/>
    <property type="project" value="RGD"/>
</dbReference>
<dbReference type="GO" id="GO:0035809">
    <property type="term" value="P:regulation of urine volume"/>
    <property type="evidence" value="ECO:0000266"/>
    <property type="project" value="RGD"/>
</dbReference>
<dbReference type="GO" id="GO:0045472">
    <property type="term" value="P:response to ether"/>
    <property type="evidence" value="ECO:0000270"/>
    <property type="project" value="RGD"/>
</dbReference>
<dbReference type="GO" id="GO:0051384">
    <property type="term" value="P:response to glucocorticoid"/>
    <property type="evidence" value="ECO:0000270"/>
    <property type="project" value="RGD"/>
</dbReference>
<dbReference type="GO" id="GO:0001666">
    <property type="term" value="P:response to hypoxia"/>
    <property type="evidence" value="ECO:0000270"/>
    <property type="project" value="RGD"/>
</dbReference>
<dbReference type="GO" id="GO:0032868">
    <property type="term" value="P:response to insulin"/>
    <property type="evidence" value="ECO:0000270"/>
    <property type="project" value="RGD"/>
</dbReference>
<dbReference type="GO" id="GO:0032496">
    <property type="term" value="P:response to lipopolysaccharide"/>
    <property type="evidence" value="ECO:0000315"/>
    <property type="project" value="RGD"/>
</dbReference>
<dbReference type="GO" id="GO:0042594">
    <property type="term" value="P:response to starvation"/>
    <property type="evidence" value="ECO:0000270"/>
    <property type="project" value="RGD"/>
</dbReference>
<dbReference type="GO" id="GO:0060712">
    <property type="term" value="P:spongiotrophoblast layer development"/>
    <property type="evidence" value="ECO:0000266"/>
    <property type="project" value="RGD"/>
</dbReference>
<dbReference type="GO" id="GO:0097084">
    <property type="term" value="P:vascular associated smooth muscle cell development"/>
    <property type="evidence" value="ECO:0000266"/>
    <property type="project" value="RGD"/>
</dbReference>
<dbReference type="GO" id="GO:0001570">
    <property type="term" value="P:vasculogenesis"/>
    <property type="evidence" value="ECO:0000266"/>
    <property type="project" value="RGD"/>
</dbReference>
<dbReference type="InterPro" id="IPR051665">
    <property type="entry name" value="Adrenomedullin-reg_peptide"/>
</dbReference>
<dbReference type="InterPro" id="IPR021116">
    <property type="entry name" value="Calcitonin/adrenomedullin"/>
</dbReference>
<dbReference type="InterPro" id="IPR001710">
    <property type="entry name" value="Pro-ADM"/>
</dbReference>
<dbReference type="PANTHER" id="PTHR23414">
    <property type="entry name" value="ADRENOMEDULLIN, ADM"/>
    <property type="match status" value="1"/>
</dbReference>
<dbReference type="PANTHER" id="PTHR23414:SF3">
    <property type="entry name" value="PRO-ADRENOMEDULLIN"/>
    <property type="match status" value="1"/>
</dbReference>
<dbReference type="Pfam" id="PF00214">
    <property type="entry name" value="Calc_CGRP_IAPP"/>
    <property type="match status" value="1"/>
</dbReference>
<dbReference type="PRINTS" id="PR00801">
    <property type="entry name" value="ADRENOMEDULN"/>
</dbReference>
<organism>
    <name type="scientific">Rattus norvegicus</name>
    <name type="common">Rat</name>
    <dbReference type="NCBI Taxonomy" id="10116"/>
    <lineage>
        <taxon>Eukaryota</taxon>
        <taxon>Metazoa</taxon>
        <taxon>Chordata</taxon>
        <taxon>Craniata</taxon>
        <taxon>Vertebrata</taxon>
        <taxon>Euteleostomi</taxon>
        <taxon>Mammalia</taxon>
        <taxon>Eutheria</taxon>
        <taxon>Euarchontoglires</taxon>
        <taxon>Glires</taxon>
        <taxon>Rodentia</taxon>
        <taxon>Myomorpha</taxon>
        <taxon>Muroidea</taxon>
        <taxon>Muridae</taxon>
        <taxon>Murinae</taxon>
        <taxon>Rattus</taxon>
    </lineage>
</organism>